<gene>
    <name type="primary">PSD1</name>
    <name type="ordered locus">At4g16700</name>
    <name type="ORF">dl4375c</name>
    <name type="ORF">FCAALL.4</name>
</gene>
<comment type="function">
    <text evidence="1 2 3">Catalyzes the formation of phosphatidylethanolamine (PtdEtn) from phosphatidylserine (PtdSer). Plays a central role in phospholipid metabolism and in the interorganelle trafficking of phosphatidylserine. Contributes only to a minor proportion of PtdEtn production.</text>
</comment>
<comment type="catalytic activity">
    <reaction evidence="1 5">
        <text>a 1,2-diacyl-sn-glycero-3-phospho-L-serine + H(+) = a 1,2-diacyl-sn-glycero-3-phosphoethanolamine + CO2</text>
        <dbReference type="Rhea" id="RHEA:20828"/>
        <dbReference type="ChEBI" id="CHEBI:15378"/>
        <dbReference type="ChEBI" id="CHEBI:16526"/>
        <dbReference type="ChEBI" id="CHEBI:57262"/>
        <dbReference type="ChEBI" id="CHEBI:64612"/>
        <dbReference type="EC" id="4.1.1.65"/>
    </reaction>
</comment>
<comment type="cofactor">
    <cofactor evidence="1">
        <name>pyruvate</name>
        <dbReference type="ChEBI" id="CHEBI:15361"/>
    </cofactor>
    <text evidence="1">Binds 1 pyruvoyl group covalently per subunit.</text>
</comment>
<comment type="pathway">
    <text evidence="1 5">Phospholipid metabolism; phosphatidylethanolamine biosynthesis; phosphatidylethanolamine from CDP-diacylglycerol: step 2/2.</text>
</comment>
<comment type="subunit">
    <text evidence="1">Heterodimer of a large membrane-associated beta subunit and a small pyruvoyl-containing alpha subunit.</text>
</comment>
<comment type="subcellular location">
    <molecule>Phosphatidylserine decarboxylase 1 beta chain</molecule>
    <subcellularLocation>
        <location evidence="3">Mitochondrion</location>
    </subcellularLocation>
    <subcellularLocation>
        <location evidence="1">Mitochondrion inner membrane</location>
        <topology evidence="1">Single-pass membrane protein</topology>
        <orientation evidence="1">Intermembrane side</orientation>
    </subcellularLocation>
</comment>
<comment type="subcellular location">
    <molecule>Phosphatidylserine decarboxylase 1 alpha chain</molecule>
    <subcellularLocation>
        <location evidence="3">Mitochondrion</location>
    </subcellularLocation>
    <subcellularLocation>
        <location evidence="1">Mitochondrion inner membrane</location>
        <topology evidence="1">Peripheral membrane protein</topology>
        <orientation evidence="1">Intermembrane side</orientation>
    </subcellularLocation>
    <text evidence="1">Anchored to the mitochondrial inner membrane through its interaction with the integral membrane beta chain.</text>
</comment>
<comment type="tissue specificity">
    <text evidence="2 3">Expressed in roots, leaves, stems and flowers.</text>
</comment>
<comment type="PTM">
    <text evidence="1">Is synthesized initially as an inactive proenzyme. Formation of the active enzyme involves a self-maturation process in which the active site pyruvoyl group is generated from an internal serine residue via an autocatalytic post-translational modification. Two non-identical subunits are generated from the proenzyme in this reaction, and the pyruvate is formed at the N-terminus of the alpha chain, which is derived from the carboxyl end of the proenzyme. The autoendoproteolytic cleavage occurs by a canonical serine protease mechanism, in which the side chain hydroxyl group of the serine supplies its oxygen atom to form the C-terminus of the beta chain, while the remainder of the serine residue undergoes an oxidative deamination to produce ammonia and the pyruvoyl prosthetic group on the alpha chain. During this reaction, the Ser that is part of the protease active site of the proenzyme becomes the pyruvoyl prosthetic group, which constitutes an essential element of the active site of the mature decarboxylase.</text>
</comment>
<comment type="disruption phenotype">
    <text evidence="3">No visible phenotype under normal growth conditions.</text>
</comment>
<comment type="similarity">
    <text evidence="1">Belongs to the phosphatidylserine decarboxylase family. PSD-B subfamily. Eukaryotic type I sub-subfamily.</text>
</comment>
<comment type="sequence caution" evidence="4">
    <conflict type="erroneous gene model prediction">
        <sequence resource="EMBL-CDS" id="CAB10445"/>
    </conflict>
</comment>
<comment type="sequence caution" evidence="4">
    <conflict type="erroneous gene model prediction">
        <sequence resource="EMBL-CDS" id="CAB78712"/>
    </conflict>
</comment>
<dbReference type="EC" id="4.1.1.65" evidence="1"/>
<dbReference type="EMBL" id="AY189805">
    <property type="protein sequence ID" value="AAO38842.1"/>
    <property type="molecule type" value="mRNA"/>
</dbReference>
<dbReference type="EMBL" id="Z97341">
    <property type="protein sequence ID" value="CAB10445.1"/>
    <property type="status" value="ALT_SEQ"/>
    <property type="molecule type" value="Genomic_DNA"/>
</dbReference>
<dbReference type="EMBL" id="AL161544">
    <property type="protein sequence ID" value="CAB78712.1"/>
    <property type="status" value="ALT_SEQ"/>
    <property type="molecule type" value="Genomic_DNA"/>
</dbReference>
<dbReference type="EMBL" id="CP002687">
    <property type="protein sequence ID" value="AEE83788.1"/>
    <property type="molecule type" value="Genomic_DNA"/>
</dbReference>
<dbReference type="EMBL" id="BT026135">
    <property type="protein sequence ID" value="ABG48491.1"/>
    <property type="molecule type" value="mRNA"/>
</dbReference>
<dbReference type="PIR" id="C71434">
    <property type="entry name" value="C71434"/>
</dbReference>
<dbReference type="RefSeq" id="NP_193403.2">
    <property type="nucleotide sequence ID" value="NM_117771.3"/>
</dbReference>
<dbReference type="SMR" id="Q84V22"/>
<dbReference type="FunCoup" id="Q84V22">
    <property type="interactions" value="2405"/>
</dbReference>
<dbReference type="STRING" id="3702.Q84V22"/>
<dbReference type="PaxDb" id="3702-AT4G16700.1"/>
<dbReference type="ProteomicsDB" id="226353"/>
<dbReference type="EnsemblPlants" id="AT4G16700.1">
    <property type="protein sequence ID" value="AT4G16700.1"/>
    <property type="gene ID" value="AT4G16700"/>
</dbReference>
<dbReference type="GeneID" id="827373"/>
<dbReference type="Gramene" id="AT4G16700.1">
    <property type="protein sequence ID" value="AT4G16700.1"/>
    <property type="gene ID" value="AT4G16700"/>
</dbReference>
<dbReference type="KEGG" id="ath:AT4G16700"/>
<dbReference type="Araport" id="AT4G16700"/>
<dbReference type="TAIR" id="AT4G16700">
    <property type="gene designation" value="PSD1"/>
</dbReference>
<dbReference type="eggNOG" id="KOG2420">
    <property type="taxonomic scope" value="Eukaryota"/>
</dbReference>
<dbReference type="HOGENOM" id="CLU_029061_3_0_1"/>
<dbReference type="InParanoid" id="Q84V22"/>
<dbReference type="OMA" id="HSPASWV"/>
<dbReference type="PhylomeDB" id="Q84V22"/>
<dbReference type="BioCyc" id="ARA:AT4G16700-MONOMER"/>
<dbReference type="BioCyc" id="MetaCyc:AT4G16700-MONOMER"/>
<dbReference type="UniPathway" id="UPA00558">
    <property type="reaction ID" value="UER00616"/>
</dbReference>
<dbReference type="PRO" id="PR:Q84V22"/>
<dbReference type="Proteomes" id="UP000006548">
    <property type="component" value="Chromosome 4"/>
</dbReference>
<dbReference type="ExpressionAtlas" id="Q84V22">
    <property type="expression patterns" value="baseline and differential"/>
</dbReference>
<dbReference type="GO" id="GO:0005743">
    <property type="term" value="C:mitochondrial inner membrane"/>
    <property type="evidence" value="ECO:0007669"/>
    <property type="project" value="UniProtKB-SubCell"/>
</dbReference>
<dbReference type="GO" id="GO:0005739">
    <property type="term" value="C:mitochondrion"/>
    <property type="evidence" value="ECO:0000314"/>
    <property type="project" value="TAIR"/>
</dbReference>
<dbReference type="GO" id="GO:0004609">
    <property type="term" value="F:phosphatidylserine decarboxylase activity"/>
    <property type="evidence" value="ECO:0000315"/>
    <property type="project" value="TAIR"/>
</dbReference>
<dbReference type="GO" id="GO:0006646">
    <property type="term" value="P:phosphatidylethanolamine biosynthetic process"/>
    <property type="evidence" value="ECO:0007669"/>
    <property type="project" value="UniProtKB-UniRule"/>
</dbReference>
<dbReference type="GO" id="GO:0016540">
    <property type="term" value="P:protein autoprocessing"/>
    <property type="evidence" value="ECO:0007669"/>
    <property type="project" value="UniProtKB-UniRule"/>
</dbReference>
<dbReference type="HAMAP" id="MF_03208">
    <property type="entry name" value="PS_decarb_PSD_B_type1_euk"/>
    <property type="match status" value="1"/>
</dbReference>
<dbReference type="InterPro" id="IPR003817">
    <property type="entry name" value="PS_Dcarbxylase"/>
</dbReference>
<dbReference type="InterPro" id="IPR033177">
    <property type="entry name" value="PSD-B"/>
</dbReference>
<dbReference type="InterPro" id="IPR033661">
    <property type="entry name" value="PSD_type1_euk"/>
</dbReference>
<dbReference type="NCBIfam" id="TIGR00163">
    <property type="entry name" value="PS_decarb"/>
    <property type="match status" value="1"/>
</dbReference>
<dbReference type="PANTHER" id="PTHR10067">
    <property type="entry name" value="PHOSPHATIDYLSERINE DECARBOXYLASE"/>
    <property type="match status" value="1"/>
</dbReference>
<dbReference type="PANTHER" id="PTHR10067:SF6">
    <property type="entry name" value="PHOSPHATIDYLSERINE DECARBOXYLASE PROENZYME, MITOCHONDRIAL"/>
    <property type="match status" value="1"/>
</dbReference>
<dbReference type="Pfam" id="PF02666">
    <property type="entry name" value="PS_Dcarbxylase"/>
    <property type="match status" value="1"/>
</dbReference>
<evidence type="ECO:0000255" key="1">
    <source>
        <dbReference type="HAMAP-Rule" id="MF_03208"/>
    </source>
</evidence>
<evidence type="ECO:0000269" key="2">
    <source>
    </source>
</evidence>
<evidence type="ECO:0000269" key="3">
    <source>
    </source>
</evidence>
<evidence type="ECO:0000305" key="4"/>
<evidence type="ECO:0000305" key="5">
    <source>
    </source>
</evidence>
<name>PSD1_ARATH</name>
<keyword id="KW-0210">Decarboxylase</keyword>
<keyword id="KW-0444">Lipid biosynthesis</keyword>
<keyword id="KW-0443">Lipid metabolism</keyword>
<keyword id="KW-0456">Lyase</keyword>
<keyword id="KW-0472">Membrane</keyword>
<keyword id="KW-0496">Mitochondrion</keyword>
<keyword id="KW-0999">Mitochondrion inner membrane</keyword>
<keyword id="KW-0594">Phospholipid biosynthesis</keyword>
<keyword id="KW-1208">Phospholipid metabolism</keyword>
<keyword id="KW-0670">Pyruvate</keyword>
<keyword id="KW-1185">Reference proteome</keyword>
<keyword id="KW-0809">Transit peptide</keyword>
<keyword id="KW-0812">Transmembrane</keyword>
<keyword id="KW-1133">Transmembrane helix</keyword>
<keyword id="KW-0865">Zymogen</keyword>
<sequence length="453" mass="50560">MKPRFPQNVYFLARYSYLRRFQHSQRRTFSSFLNNIRSNYSGARASPLGGSSGAGAGAGGGGTGDSKGNAFLVPGATMATILMLGALHARRLYEDKKIEEKREKGIELEFHPDIKASFLGVLPLRSISRAWGSFMSLEIPVWMRPYAYKAWARAFHSNLEEAALPLEEYTSLQDFFVRSLKEGCRPIDPDPCCLVSPVDGTVLRFGELKGNRGMIEQVKGHSYSVPALLGNNSLLPMEPEGKNESKEEAVGDKSDKSWLRVSLASPKLRENVSASPMKGLYYCVIYLKPGDYHRIHSPADWNATVRRHFAGRLFPVNERATRTIRNLYVENERVVLEGIWKEGFMALAAVGATNIGSIELFIEPELRTNKPKKKLFPTEPPEERVYDPEGLGLRLEKGKEVAVFNMGSTVVLIFQAPTANTPEGSSSSSDYRFCVKQGDRVRVGQALGRWKEE</sequence>
<feature type="transit peptide" description="Mitochondrion" evidence="1">
    <location>
        <begin position="1"/>
        <end position="29"/>
    </location>
</feature>
<feature type="chain" id="PRO_0000429511" description="Phosphatidylserine decarboxylase proenzyme 1, mitochondrial">
    <location>
        <begin position="30"/>
        <end position="453"/>
    </location>
</feature>
<feature type="chain" id="PRO_0000429512" description="Phosphatidylserine decarboxylase 1 beta chain" evidence="1">
    <location>
        <begin position="30"/>
        <end position="407"/>
    </location>
</feature>
<feature type="chain" id="PRO_0000429513" description="Phosphatidylserine decarboxylase 1 alpha chain" evidence="1">
    <location>
        <begin position="408"/>
        <end position="453"/>
    </location>
</feature>
<feature type="topological domain" description="Mitochondrial matrix" evidence="1">
    <location>
        <begin position="30"/>
        <end position="74"/>
    </location>
</feature>
<feature type="transmembrane region" description="Helical" evidence="1">
    <location>
        <begin position="75"/>
        <end position="93"/>
    </location>
</feature>
<feature type="topological domain" description="Mitochondrial intermembrane" evidence="1">
    <location>
        <begin position="94"/>
        <end position="453"/>
    </location>
</feature>
<feature type="active site" description="Charge relay system; for autoendoproteolytic cleavage activity" evidence="1">
    <location>
        <position position="199"/>
    </location>
</feature>
<feature type="active site" description="Charge relay system; for autoendoproteolytic cleavage activity" evidence="1">
    <location>
        <position position="296"/>
    </location>
</feature>
<feature type="active site" description="Charge relay system; for autoendoproteolytic cleavage activity" evidence="1">
    <location>
        <position position="408"/>
    </location>
</feature>
<feature type="active site" description="Schiff-base intermediate with substrate; via pyruvic acid; for decarboxylase activity" evidence="1">
    <location>
        <position position="408"/>
    </location>
</feature>
<feature type="site" description="Cleavage (non-hydrolytic); by autocatalysis" evidence="1">
    <location>
        <begin position="407"/>
        <end position="408"/>
    </location>
</feature>
<feature type="modified residue" description="Pyruvic acid (Ser); by autocatalysis" evidence="1">
    <location>
        <position position="408"/>
    </location>
</feature>
<reference key="1">
    <citation type="journal article" date="2003" name="Plant Physiol.">
        <title>Mitochondrial phosphatidylserine decarboxylase from higher plants. Functional complementation in yeast, localization in plants, and overexpression in Arabidopsis.</title>
        <authorList>
            <person name="Rontein D."/>
            <person name="Wu W.-I."/>
            <person name="Voelker D.R."/>
            <person name="Hanson A.D."/>
        </authorList>
    </citation>
    <scope>NUCLEOTIDE SEQUENCE [MRNA]</scope>
    <scope>FUNCTION</scope>
    <scope>TISSUE SPECIFICITY</scope>
</reference>
<reference key="2">
    <citation type="journal article" date="1998" name="Nature">
        <title>Analysis of 1.9 Mb of contiguous sequence from chromosome 4 of Arabidopsis thaliana.</title>
        <authorList>
            <person name="Bevan M."/>
            <person name="Bancroft I."/>
            <person name="Bent E."/>
            <person name="Love K."/>
            <person name="Goodman H.M."/>
            <person name="Dean C."/>
            <person name="Bergkamp R."/>
            <person name="Dirkse W."/>
            <person name="van Staveren M."/>
            <person name="Stiekema W."/>
            <person name="Drost L."/>
            <person name="Ridley P."/>
            <person name="Hudson S.-A."/>
            <person name="Patel K."/>
            <person name="Murphy G."/>
            <person name="Piffanelli P."/>
            <person name="Wedler H."/>
            <person name="Wedler E."/>
            <person name="Wambutt R."/>
            <person name="Weitzenegger T."/>
            <person name="Pohl T."/>
            <person name="Terryn N."/>
            <person name="Gielen J."/>
            <person name="Villarroel R."/>
            <person name="De Clercq R."/>
            <person name="van Montagu M."/>
            <person name="Lecharny A."/>
            <person name="Aubourg S."/>
            <person name="Gy I."/>
            <person name="Kreis M."/>
            <person name="Lao N."/>
            <person name="Kavanagh T."/>
            <person name="Hempel S."/>
            <person name="Kotter P."/>
            <person name="Entian K.-D."/>
            <person name="Rieger M."/>
            <person name="Schaefer M."/>
            <person name="Funk B."/>
            <person name="Mueller-Auer S."/>
            <person name="Silvey M."/>
            <person name="James R."/>
            <person name="Monfort A."/>
            <person name="Pons A."/>
            <person name="Puigdomenech P."/>
            <person name="Douka A."/>
            <person name="Voukelatou E."/>
            <person name="Milioni D."/>
            <person name="Hatzopoulos P."/>
            <person name="Piravandi E."/>
            <person name="Obermaier B."/>
            <person name="Hilbert H."/>
            <person name="Duesterhoeft A."/>
            <person name="Moores T."/>
            <person name="Jones J.D.G."/>
            <person name="Eneva T."/>
            <person name="Palme K."/>
            <person name="Benes V."/>
            <person name="Rechmann S."/>
            <person name="Ansorge W."/>
            <person name="Cooke R."/>
            <person name="Berger C."/>
            <person name="Delseny M."/>
            <person name="Voet M."/>
            <person name="Volckaert G."/>
            <person name="Mewes H.-W."/>
            <person name="Klosterman S."/>
            <person name="Schueller C."/>
            <person name="Chalwatzis N."/>
        </authorList>
    </citation>
    <scope>NUCLEOTIDE SEQUENCE [LARGE SCALE GENOMIC DNA]</scope>
    <source>
        <strain>cv. Columbia</strain>
    </source>
</reference>
<reference key="3">
    <citation type="journal article" date="1999" name="Nature">
        <title>Sequence and analysis of chromosome 4 of the plant Arabidopsis thaliana.</title>
        <authorList>
            <person name="Mayer K.F.X."/>
            <person name="Schueller C."/>
            <person name="Wambutt R."/>
            <person name="Murphy G."/>
            <person name="Volckaert G."/>
            <person name="Pohl T."/>
            <person name="Duesterhoeft A."/>
            <person name="Stiekema W."/>
            <person name="Entian K.-D."/>
            <person name="Terryn N."/>
            <person name="Harris B."/>
            <person name="Ansorge W."/>
            <person name="Brandt P."/>
            <person name="Grivell L.A."/>
            <person name="Rieger M."/>
            <person name="Weichselgartner M."/>
            <person name="de Simone V."/>
            <person name="Obermaier B."/>
            <person name="Mache R."/>
            <person name="Mueller M."/>
            <person name="Kreis M."/>
            <person name="Delseny M."/>
            <person name="Puigdomenech P."/>
            <person name="Watson M."/>
            <person name="Schmidtheini T."/>
            <person name="Reichert B."/>
            <person name="Portetelle D."/>
            <person name="Perez-Alonso M."/>
            <person name="Boutry M."/>
            <person name="Bancroft I."/>
            <person name="Vos P."/>
            <person name="Hoheisel J."/>
            <person name="Zimmermann W."/>
            <person name="Wedler H."/>
            <person name="Ridley P."/>
            <person name="Langham S.-A."/>
            <person name="McCullagh B."/>
            <person name="Bilham L."/>
            <person name="Robben J."/>
            <person name="van der Schueren J."/>
            <person name="Grymonprez B."/>
            <person name="Chuang Y.-J."/>
            <person name="Vandenbussche F."/>
            <person name="Braeken M."/>
            <person name="Weltjens I."/>
            <person name="Voet M."/>
            <person name="Bastiaens I."/>
            <person name="Aert R."/>
            <person name="Defoor E."/>
            <person name="Weitzenegger T."/>
            <person name="Bothe G."/>
            <person name="Ramsperger U."/>
            <person name="Hilbert H."/>
            <person name="Braun M."/>
            <person name="Holzer E."/>
            <person name="Brandt A."/>
            <person name="Peters S."/>
            <person name="van Staveren M."/>
            <person name="Dirkse W."/>
            <person name="Mooijman P."/>
            <person name="Klein Lankhorst R."/>
            <person name="Rose M."/>
            <person name="Hauf J."/>
            <person name="Koetter P."/>
            <person name="Berneiser S."/>
            <person name="Hempel S."/>
            <person name="Feldpausch M."/>
            <person name="Lamberth S."/>
            <person name="Van den Daele H."/>
            <person name="De Keyser A."/>
            <person name="Buysshaert C."/>
            <person name="Gielen J."/>
            <person name="Villarroel R."/>
            <person name="De Clercq R."/>
            <person name="van Montagu M."/>
            <person name="Rogers J."/>
            <person name="Cronin A."/>
            <person name="Quail M.A."/>
            <person name="Bray-Allen S."/>
            <person name="Clark L."/>
            <person name="Doggett J."/>
            <person name="Hall S."/>
            <person name="Kay M."/>
            <person name="Lennard N."/>
            <person name="McLay K."/>
            <person name="Mayes R."/>
            <person name="Pettett A."/>
            <person name="Rajandream M.A."/>
            <person name="Lyne M."/>
            <person name="Benes V."/>
            <person name="Rechmann S."/>
            <person name="Borkova D."/>
            <person name="Bloecker H."/>
            <person name="Scharfe M."/>
            <person name="Grimm M."/>
            <person name="Loehnert T.-H."/>
            <person name="Dose S."/>
            <person name="de Haan M."/>
            <person name="Maarse A.C."/>
            <person name="Schaefer M."/>
            <person name="Mueller-Auer S."/>
            <person name="Gabel C."/>
            <person name="Fuchs M."/>
            <person name="Fartmann B."/>
            <person name="Granderath K."/>
            <person name="Dauner D."/>
            <person name="Herzl A."/>
            <person name="Neumann S."/>
            <person name="Argiriou A."/>
            <person name="Vitale D."/>
            <person name="Liguori R."/>
            <person name="Piravandi E."/>
            <person name="Massenet O."/>
            <person name="Quigley F."/>
            <person name="Clabauld G."/>
            <person name="Muendlein A."/>
            <person name="Felber R."/>
            <person name="Schnabl S."/>
            <person name="Hiller R."/>
            <person name="Schmidt W."/>
            <person name="Lecharny A."/>
            <person name="Aubourg S."/>
            <person name="Chefdor F."/>
            <person name="Cooke R."/>
            <person name="Berger C."/>
            <person name="Monfort A."/>
            <person name="Casacuberta E."/>
            <person name="Gibbons T."/>
            <person name="Weber N."/>
            <person name="Vandenbol M."/>
            <person name="Bargues M."/>
            <person name="Terol J."/>
            <person name="Torres A."/>
            <person name="Perez-Perez A."/>
            <person name="Purnelle B."/>
            <person name="Bent E."/>
            <person name="Johnson S."/>
            <person name="Tacon D."/>
            <person name="Jesse T."/>
            <person name="Heijnen L."/>
            <person name="Schwarz S."/>
            <person name="Scholler P."/>
            <person name="Heber S."/>
            <person name="Francs P."/>
            <person name="Bielke C."/>
            <person name="Frishman D."/>
            <person name="Haase D."/>
            <person name="Lemcke K."/>
            <person name="Mewes H.-W."/>
            <person name="Stocker S."/>
            <person name="Zaccaria P."/>
            <person name="Bevan M."/>
            <person name="Wilson R.K."/>
            <person name="de la Bastide M."/>
            <person name="Habermann K."/>
            <person name="Parnell L."/>
            <person name="Dedhia N."/>
            <person name="Gnoj L."/>
            <person name="Schutz K."/>
            <person name="Huang E."/>
            <person name="Spiegel L."/>
            <person name="Sekhon M."/>
            <person name="Murray J."/>
            <person name="Sheet P."/>
            <person name="Cordes M."/>
            <person name="Abu-Threideh J."/>
            <person name="Stoneking T."/>
            <person name="Kalicki J."/>
            <person name="Graves T."/>
            <person name="Harmon G."/>
            <person name="Edwards J."/>
            <person name="Latreille P."/>
            <person name="Courtney L."/>
            <person name="Cloud J."/>
            <person name="Abbott A."/>
            <person name="Scott K."/>
            <person name="Johnson D."/>
            <person name="Minx P."/>
            <person name="Bentley D."/>
            <person name="Fulton B."/>
            <person name="Miller N."/>
            <person name="Greco T."/>
            <person name="Kemp K."/>
            <person name="Kramer J."/>
            <person name="Fulton L."/>
            <person name="Mardis E."/>
            <person name="Dante M."/>
            <person name="Pepin K."/>
            <person name="Hillier L.W."/>
            <person name="Nelson J."/>
            <person name="Spieth J."/>
            <person name="Ryan E."/>
            <person name="Andrews S."/>
            <person name="Geisel C."/>
            <person name="Layman D."/>
            <person name="Du H."/>
            <person name="Ali J."/>
            <person name="Berghoff A."/>
            <person name="Jones K."/>
            <person name="Drone K."/>
            <person name="Cotton M."/>
            <person name="Joshu C."/>
            <person name="Antonoiu B."/>
            <person name="Zidanic M."/>
            <person name="Strong C."/>
            <person name="Sun H."/>
            <person name="Lamar B."/>
            <person name="Yordan C."/>
            <person name="Ma P."/>
            <person name="Zhong J."/>
            <person name="Preston R."/>
            <person name="Vil D."/>
            <person name="Shekher M."/>
            <person name="Matero A."/>
            <person name="Shah R."/>
            <person name="Swaby I.K."/>
            <person name="O'Shaughnessy A."/>
            <person name="Rodriguez M."/>
            <person name="Hoffman J."/>
            <person name="Till S."/>
            <person name="Granat S."/>
            <person name="Shohdy N."/>
            <person name="Hasegawa A."/>
            <person name="Hameed A."/>
            <person name="Lodhi M."/>
            <person name="Johnson A."/>
            <person name="Chen E."/>
            <person name="Marra M.A."/>
            <person name="Martienssen R."/>
            <person name="McCombie W.R."/>
        </authorList>
    </citation>
    <scope>NUCLEOTIDE SEQUENCE [LARGE SCALE GENOMIC DNA]</scope>
    <source>
        <strain>cv. Columbia</strain>
    </source>
</reference>
<reference key="4">
    <citation type="journal article" date="2017" name="Plant J.">
        <title>Araport11: a complete reannotation of the Arabidopsis thaliana reference genome.</title>
        <authorList>
            <person name="Cheng C.Y."/>
            <person name="Krishnakumar V."/>
            <person name="Chan A.P."/>
            <person name="Thibaud-Nissen F."/>
            <person name="Schobel S."/>
            <person name="Town C.D."/>
        </authorList>
    </citation>
    <scope>GENOME REANNOTATION</scope>
    <source>
        <strain>cv. Columbia</strain>
    </source>
</reference>
<reference key="5">
    <citation type="submission" date="2006-07" db="EMBL/GenBank/DDBJ databases">
        <title>Arabidopsis ORF clones.</title>
        <authorList>
            <person name="Kim C.J."/>
            <person name="Chen H."/>
            <person name="Quinitio C."/>
            <person name="Shinn P."/>
            <person name="Ecker J.R."/>
        </authorList>
    </citation>
    <scope>NUCLEOTIDE SEQUENCE [LARGE SCALE MRNA]</scope>
    <source>
        <strain>cv. Columbia</strain>
    </source>
</reference>
<reference key="6">
    <citation type="journal article" date="2007" name="Plant Physiol.">
        <title>Deficiency in phosphatidylserine decarboxylase activity in the psd1 psd2 psd3 triple mutant of Arabidopsis affects phosphatidylethanolamine accumulation in mitochondria.</title>
        <authorList>
            <person name="Nerlich A."/>
            <person name="von Orlow M."/>
            <person name="Rontein D."/>
            <person name="Hanson A.D."/>
            <person name="Dormann P."/>
        </authorList>
    </citation>
    <scope>FUNCTION</scope>
    <scope>SUBCELLULAR LOCATION</scope>
    <scope>TISSUE SPECIFICITY</scope>
    <scope>DISRUPTION PHENOTYPE</scope>
</reference>
<proteinExistence type="evidence at transcript level"/>
<protein>
    <recommendedName>
        <fullName evidence="1">Phosphatidylserine decarboxylase proenzyme 1, mitochondrial</fullName>
        <ecNumber evidence="1">4.1.1.65</ecNumber>
    </recommendedName>
    <component>
        <recommendedName>
            <fullName evidence="1">Phosphatidylserine decarboxylase 1 beta chain</fullName>
        </recommendedName>
    </component>
    <component>
        <recommendedName>
            <fullName evidence="1">Phosphatidylserine decarboxylase 1 alpha chain</fullName>
        </recommendedName>
    </component>
</protein>
<accession>Q84V22</accession>
<accession>O23513</accession>
<organism>
    <name type="scientific">Arabidopsis thaliana</name>
    <name type="common">Mouse-ear cress</name>
    <dbReference type="NCBI Taxonomy" id="3702"/>
    <lineage>
        <taxon>Eukaryota</taxon>
        <taxon>Viridiplantae</taxon>
        <taxon>Streptophyta</taxon>
        <taxon>Embryophyta</taxon>
        <taxon>Tracheophyta</taxon>
        <taxon>Spermatophyta</taxon>
        <taxon>Magnoliopsida</taxon>
        <taxon>eudicotyledons</taxon>
        <taxon>Gunneridae</taxon>
        <taxon>Pentapetalae</taxon>
        <taxon>rosids</taxon>
        <taxon>malvids</taxon>
        <taxon>Brassicales</taxon>
        <taxon>Brassicaceae</taxon>
        <taxon>Camelineae</taxon>
        <taxon>Arabidopsis</taxon>
    </lineage>
</organism>